<dbReference type="EC" id="3.6.1.42" evidence="4"/>
<dbReference type="EMBL" id="AJ421721">
    <property type="protein sequence ID" value="CAD18870.1"/>
    <property type="molecule type" value="Genomic_DNA"/>
</dbReference>
<dbReference type="EMBL" id="CP017625">
    <property type="protein sequence ID" value="AOW28620.1"/>
    <property type="molecule type" value="Genomic_DNA"/>
</dbReference>
<dbReference type="RefSeq" id="XP_716635.1">
    <property type="nucleotide sequence ID" value="XM_711542.1"/>
</dbReference>
<dbReference type="SMR" id="Q8TGH6"/>
<dbReference type="FunCoup" id="Q8TGH6">
    <property type="interactions" value="382"/>
</dbReference>
<dbReference type="STRING" id="237561.Q8TGH6"/>
<dbReference type="EnsemblFungi" id="C3_06120C_A-T">
    <property type="protein sequence ID" value="C3_06120C_A-T-p1"/>
    <property type="gene ID" value="C3_06120C_A"/>
</dbReference>
<dbReference type="GeneID" id="3641762"/>
<dbReference type="KEGG" id="cal:CAALFM_C306120CA"/>
<dbReference type="CGD" id="CAL0000196532">
    <property type="gene designation" value="GDA1"/>
</dbReference>
<dbReference type="VEuPathDB" id="FungiDB:C3_06120C_A"/>
<dbReference type="eggNOG" id="KOG1385">
    <property type="taxonomic scope" value="Eukaryota"/>
</dbReference>
<dbReference type="HOGENOM" id="CLU_010246_4_1_1"/>
<dbReference type="InParanoid" id="Q8TGH6"/>
<dbReference type="OMA" id="WTCRIKE"/>
<dbReference type="OrthoDB" id="6372431at2759"/>
<dbReference type="BRENDA" id="3.6.1.42">
    <property type="organism ID" value="1096"/>
</dbReference>
<dbReference type="UniPathway" id="UPA00378"/>
<dbReference type="Proteomes" id="UP000000559">
    <property type="component" value="Chromosome 3"/>
</dbReference>
<dbReference type="GO" id="GO:0005794">
    <property type="term" value="C:Golgi apparatus"/>
    <property type="evidence" value="ECO:0000314"/>
    <property type="project" value="CGD"/>
</dbReference>
<dbReference type="GO" id="GO:0000139">
    <property type="term" value="C:Golgi membrane"/>
    <property type="evidence" value="ECO:0000314"/>
    <property type="project" value="CGD"/>
</dbReference>
<dbReference type="GO" id="GO:0016020">
    <property type="term" value="C:membrane"/>
    <property type="evidence" value="ECO:0000318"/>
    <property type="project" value="GO_Central"/>
</dbReference>
<dbReference type="GO" id="GO:0004382">
    <property type="term" value="F:GDP phosphatase activity"/>
    <property type="evidence" value="ECO:0000314"/>
    <property type="project" value="CGD"/>
</dbReference>
<dbReference type="GO" id="GO:0017111">
    <property type="term" value="F:ribonucleoside triphosphate phosphatase activity"/>
    <property type="evidence" value="ECO:0000318"/>
    <property type="project" value="GO_Central"/>
</dbReference>
<dbReference type="GO" id="GO:0045134">
    <property type="term" value="F:UDP phosphatase activity"/>
    <property type="evidence" value="ECO:0000314"/>
    <property type="project" value="CGD"/>
</dbReference>
<dbReference type="GO" id="GO:0036187">
    <property type="term" value="P:cell growth mode switching, budding to filamentous"/>
    <property type="evidence" value="ECO:0000315"/>
    <property type="project" value="CGD"/>
</dbReference>
<dbReference type="GO" id="GO:0036244">
    <property type="term" value="P:cellular response to neutral pH"/>
    <property type="evidence" value="ECO:0000315"/>
    <property type="project" value="CGD"/>
</dbReference>
<dbReference type="GO" id="GO:0030447">
    <property type="term" value="P:filamentous growth"/>
    <property type="evidence" value="ECO:0000315"/>
    <property type="project" value="CGD"/>
</dbReference>
<dbReference type="GO" id="GO:0036178">
    <property type="term" value="P:filamentous growth of a population of unicellular organisms in response to neutral pH"/>
    <property type="evidence" value="ECO:0000315"/>
    <property type="project" value="CGD"/>
</dbReference>
<dbReference type="GO" id="GO:0009272">
    <property type="term" value="P:fungal-type cell wall biogenesis"/>
    <property type="evidence" value="ECO:0000315"/>
    <property type="project" value="CGD"/>
</dbReference>
<dbReference type="GO" id="GO:0009134">
    <property type="term" value="P:nucleoside diphosphate catabolic process"/>
    <property type="evidence" value="ECO:0000318"/>
    <property type="project" value="GO_Central"/>
</dbReference>
<dbReference type="GO" id="GO:0006486">
    <property type="term" value="P:protein glycosylation"/>
    <property type="evidence" value="ECO:0000315"/>
    <property type="project" value="CGD"/>
</dbReference>
<dbReference type="GO" id="GO:0006487">
    <property type="term" value="P:protein N-linked glycosylation"/>
    <property type="evidence" value="ECO:0000318"/>
    <property type="project" value="GO_Central"/>
</dbReference>
<dbReference type="GO" id="GO:0006493">
    <property type="term" value="P:protein O-linked glycosylation"/>
    <property type="evidence" value="ECO:0000315"/>
    <property type="project" value="CGD"/>
</dbReference>
<dbReference type="CDD" id="cd24040">
    <property type="entry name" value="ASKHA_NBD_GDA1"/>
    <property type="match status" value="1"/>
</dbReference>
<dbReference type="FunFam" id="3.30.420.40:FF:000052">
    <property type="entry name" value="Ectonucleoside triphosphate diphosphohydrolase 5"/>
    <property type="match status" value="1"/>
</dbReference>
<dbReference type="FunFam" id="3.30.420.150:FF:000009">
    <property type="entry name" value="Guanosine-diphosphatase, putative"/>
    <property type="match status" value="1"/>
</dbReference>
<dbReference type="Gene3D" id="3.30.420.40">
    <property type="match status" value="1"/>
</dbReference>
<dbReference type="Gene3D" id="3.30.420.150">
    <property type="entry name" value="Exopolyphosphatase. Domain 2"/>
    <property type="match status" value="1"/>
</dbReference>
<dbReference type="InterPro" id="IPR000407">
    <property type="entry name" value="GDA1_CD39_NTPase"/>
</dbReference>
<dbReference type="PANTHER" id="PTHR11782">
    <property type="entry name" value="ADENOSINE/GUANOSINE DIPHOSPHATASE"/>
    <property type="match status" value="1"/>
</dbReference>
<dbReference type="PANTHER" id="PTHR11782:SF83">
    <property type="entry name" value="GUANOSINE-DIPHOSPHATASE"/>
    <property type="match status" value="1"/>
</dbReference>
<dbReference type="Pfam" id="PF01150">
    <property type="entry name" value="GDA1_CD39"/>
    <property type="match status" value="1"/>
</dbReference>
<dbReference type="PROSITE" id="PS01238">
    <property type="entry name" value="GDA1_CD39_NTPASE"/>
    <property type="match status" value="1"/>
</dbReference>
<comment type="function">
    <text evidence="4">After transfer of sugars to endogenous macromolecular acceptors, the enzyme converts nucleoside diphosphates to nucleoside monophosphates which in turn exit the Golgi lumen in a coupled antiporter reaction, allowing entry of additional nucleotide sugar from the cytosol.</text>
</comment>
<comment type="function">
    <text evidence="4">Has a role in cell wall morphogenesis during the transition of budding growth into hyphal growth, a process known as dimorphism.</text>
</comment>
<comment type="catalytic activity">
    <reaction evidence="4">
        <text>GDP + H2O = GMP + phosphate + H(+)</text>
        <dbReference type="Rhea" id="RHEA:22156"/>
        <dbReference type="ChEBI" id="CHEBI:15377"/>
        <dbReference type="ChEBI" id="CHEBI:15378"/>
        <dbReference type="ChEBI" id="CHEBI:43474"/>
        <dbReference type="ChEBI" id="CHEBI:58115"/>
        <dbReference type="ChEBI" id="CHEBI:58189"/>
        <dbReference type="EC" id="3.6.1.42"/>
    </reaction>
</comment>
<comment type="pathway">
    <text>Protein modification; protein glycosylation.</text>
</comment>
<comment type="subcellular location">
    <subcellularLocation>
        <location evidence="4">Golgi apparatus membrane</location>
        <topology evidence="4">Single-pass type II membrane protein</topology>
    </subcellularLocation>
</comment>
<comment type="similarity">
    <text evidence="5">Belongs to the GDA1/CD39 NTPase family.</text>
</comment>
<gene>
    <name type="primary">GDA1</name>
    <name type="ordered locus">CAALFM_C306120CA</name>
    <name type="ORF">CaO19.7394</name>
</gene>
<sequence>MINPRNLRLIIAVIGLVGIFAFFASSQHSLVDRTALQVNKPAADSPHVPPPAAAAAPVSPPPPSQQQKQQEGSQKQLNDENSDEKNTLQGTSYSGTKPPYEKVDGKSNKILADKLDTTKNSKPNQQQQQNTQKGASEEKSAQNKITTPEEVSMDNGKCNDIDYVVMIDAGSTGSRVHVYEFNTCVKPPQLLSEEFEMLKPGLSSFDTDTVGAAKSLDPLLEVALKKVPKNKQSCTPVAVKATAGLRLLGETKSKAILDEVRSHLEKDYPFAVVSEDGISIMDGKDEGVYAWVTANYLLGNIGGKEKLPTAAVFDLGGGSTQIVFEPDYKVDEVPVDGETKYHFTFGDNQYTLYQFSHLGYGLMQGRNKVNQLVLKNKLSELNLQKYTKKEVKGAKATVDVSNPCIPPGVVAKDVQVELGEDEFYVVNMKGPSSKDSTVAGGSQCRYLAEKVLNKDAECTSKPCSFNGVHQPSLTRTFNKNSDMYVFSYFYDRTNPIGMPSSFSVEELKDLSKLVCQGETFWKDILLDDHVKNLNEEPQWCLDLSFITAMLHTGYDIPLHRELKTAKTIDNNELGWCLGASLPLLDKNNAKWTCRIDKTD</sequence>
<accession>Q8TGH6</accession>
<accession>A0A1D8PKG9</accession>
<accession>Q5A4E0</accession>
<feature type="chain" id="PRO_0000209916" description="Guanosine-diphosphatase">
    <location>
        <begin position="1"/>
        <end position="599"/>
    </location>
</feature>
<feature type="topological domain" description="Cytoplasmic" evidence="2">
    <location>
        <begin position="1"/>
        <end position="6"/>
    </location>
</feature>
<feature type="transmembrane region" description="Helical; Signal-anchor for type II membrane protein" evidence="2">
    <location>
        <begin position="7"/>
        <end position="24"/>
    </location>
</feature>
<feature type="topological domain" description="Lumenal" evidence="2">
    <location>
        <begin position="25"/>
        <end position="599"/>
    </location>
</feature>
<feature type="region of interest" description="Disordered" evidence="3">
    <location>
        <begin position="41"/>
        <end position="105"/>
    </location>
</feature>
<feature type="region of interest" description="Disordered" evidence="3">
    <location>
        <begin position="117"/>
        <end position="155"/>
    </location>
</feature>
<feature type="compositionally biased region" description="Pro residues" evidence="3">
    <location>
        <begin position="47"/>
        <end position="64"/>
    </location>
</feature>
<feature type="compositionally biased region" description="Low complexity" evidence="3">
    <location>
        <begin position="65"/>
        <end position="76"/>
    </location>
</feature>
<feature type="compositionally biased region" description="Low complexity" evidence="3">
    <location>
        <begin position="120"/>
        <end position="133"/>
    </location>
</feature>
<feature type="active site" description="Proton acceptor" evidence="1">
    <location>
        <position position="286"/>
    </location>
</feature>
<protein>
    <recommendedName>
        <fullName>Guanosine-diphosphatase</fullName>
        <shortName>GDPase</shortName>
        <ecNumber evidence="4">3.6.1.42</ecNumber>
    </recommendedName>
</protein>
<keyword id="KW-0333">Golgi apparatus</keyword>
<keyword id="KW-0378">Hydrolase</keyword>
<keyword id="KW-0472">Membrane</keyword>
<keyword id="KW-1185">Reference proteome</keyword>
<keyword id="KW-0735">Signal-anchor</keyword>
<keyword id="KW-0812">Transmembrane</keyword>
<keyword id="KW-1133">Transmembrane helix</keyword>
<name>GDA1_CANAL</name>
<evidence type="ECO:0000250" key="1"/>
<evidence type="ECO:0000255" key="2"/>
<evidence type="ECO:0000256" key="3">
    <source>
        <dbReference type="SAM" id="MobiDB-lite"/>
    </source>
</evidence>
<evidence type="ECO:0000269" key="4">
    <source>
    </source>
</evidence>
<evidence type="ECO:0000305" key="5"/>
<organism>
    <name type="scientific">Candida albicans (strain SC5314 / ATCC MYA-2876)</name>
    <name type="common">Yeast</name>
    <dbReference type="NCBI Taxonomy" id="237561"/>
    <lineage>
        <taxon>Eukaryota</taxon>
        <taxon>Fungi</taxon>
        <taxon>Dikarya</taxon>
        <taxon>Ascomycota</taxon>
        <taxon>Saccharomycotina</taxon>
        <taxon>Pichiomycetes</taxon>
        <taxon>Debaryomycetaceae</taxon>
        <taxon>Candida/Lodderomyces clade</taxon>
        <taxon>Candida</taxon>
    </lineage>
</organism>
<reference key="1">
    <citation type="journal article" date="2002" name="Eukaryot. Cell">
        <title>The Golgi GDPase of the fungal pathogen Candida albicans affects morphogenesis, glycosylation, and cell wall properties.</title>
        <authorList>
            <person name="Herrero A.B."/>
            <person name="Uccelletti D."/>
            <person name="Hirschberg C.B."/>
            <person name="Dominguez A."/>
            <person name="Abeijon C."/>
        </authorList>
    </citation>
    <scope>NUCLEOTIDE SEQUENCE [GENOMIC DNA]</scope>
    <scope>FUNCTION</scope>
    <scope>SUBCELLULAR LOCATION</scope>
    <scope>CATALYTIC ACTIVITY</scope>
</reference>
<reference key="2">
    <citation type="journal article" date="2004" name="Proc. Natl. Acad. Sci. U.S.A.">
        <title>The diploid genome sequence of Candida albicans.</title>
        <authorList>
            <person name="Jones T."/>
            <person name="Federspiel N.A."/>
            <person name="Chibana H."/>
            <person name="Dungan J."/>
            <person name="Kalman S."/>
            <person name="Magee B.B."/>
            <person name="Newport G."/>
            <person name="Thorstenson Y.R."/>
            <person name="Agabian N."/>
            <person name="Magee P.T."/>
            <person name="Davis R.W."/>
            <person name="Scherer S."/>
        </authorList>
    </citation>
    <scope>NUCLEOTIDE SEQUENCE [LARGE SCALE GENOMIC DNA]</scope>
    <source>
        <strain>SC5314 / ATCC MYA-2876</strain>
    </source>
</reference>
<reference key="3">
    <citation type="journal article" date="2007" name="Genome Biol.">
        <title>Assembly of the Candida albicans genome into sixteen supercontigs aligned on the eight chromosomes.</title>
        <authorList>
            <person name="van het Hoog M."/>
            <person name="Rast T.J."/>
            <person name="Martchenko M."/>
            <person name="Grindle S."/>
            <person name="Dignard D."/>
            <person name="Hogues H."/>
            <person name="Cuomo C."/>
            <person name="Berriman M."/>
            <person name="Scherer S."/>
            <person name="Magee B.B."/>
            <person name="Whiteway M."/>
            <person name="Chibana H."/>
            <person name="Nantel A."/>
            <person name="Magee P.T."/>
        </authorList>
    </citation>
    <scope>GENOME REANNOTATION</scope>
    <source>
        <strain>SC5314 / ATCC MYA-2876</strain>
    </source>
</reference>
<reference key="4">
    <citation type="journal article" date="2013" name="Genome Biol.">
        <title>Assembly of a phased diploid Candida albicans genome facilitates allele-specific measurements and provides a simple model for repeat and indel structure.</title>
        <authorList>
            <person name="Muzzey D."/>
            <person name="Schwartz K."/>
            <person name="Weissman J.S."/>
            <person name="Sherlock G."/>
        </authorList>
    </citation>
    <scope>NUCLEOTIDE SEQUENCE [LARGE SCALE GENOMIC DNA]</scope>
    <scope>GENOME REANNOTATION</scope>
    <source>
        <strain>SC5314 / ATCC MYA-2876</strain>
    </source>
</reference>
<proteinExistence type="evidence at protein level"/>